<evidence type="ECO:0000255" key="1">
    <source>
        <dbReference type="HAMAP-Rule" id="MF_01341"/>
    </source>
</evidence>
<evidence type="ECO:0000256" key="2">
    <source>
        <dbReference type="SAM" id="MobiDB-lite"/>
    </source>
</evidence>
<evidence type="ECO:0000305" key="3"/>
<protein>
    <recommendedName>
        <fullName evidence="1">Large ribosomal subunit protein uL15</fullName>
    </recommendedName>
    <alternativeName>
        <fullName evidence="3">50S ribosomal protein L15</fullName>
    </alternativeName>
</protein>
<feature type="chain" id="PRO_1000054497" description="Large ribosomal subunit protein uL15">
    <location>
        <begin position="1"/>
        <end position="146"/>
    </location>
</feature>
<feature type="region of interest" description="Disordered" evidence="2">
    <location>
        <begin position="1"/>
        <end position="41"/>
    </location>
</feature>
<feature type="compositionally biased region" description="Basic and acidic residues" evidence="2">
    <location>
        <begin position="1"/>
        <end position="10"/>
    </location>
</feature>
<keyword id="KW-0687">Ribonucleoprotein</keyword>
<keyword id="KW-0689">Ribosomal protein</keyword>
<keyword id="KW-0694">RNA-binding</keyword>
<keyword id="KW-0699">rRNA-binding</keyword>
<gene>
    <name evidence="1" type="primary">rplO</name>
    <name type="ordered locus">BCG_0773</name>
</gene>
<organism>
    <name type="scientific">Mycobacterium bovis (strain BCG / Pasteur 1173P2)</name>
    <dbReference type="NCBI Taxonomy" id="410289"/>
    <lineage>
        <taxon>Bacteria</taxon>
        <taxon>Bacillati</taxon>
        <taxon>Actinomycetota</taxon>
        <taxon>Actinomycetes</taxon>
        <taxon>Mycobacteriales</taxon>
        <taxon>Mycobacteriaceae</taxon>
        <taxon>Mycobacterium</taxon>
        <taxon>Mycobacterium tuberculosis complex</taxon>
    </lineage>
</organism>
<comment type="function">
    <text evidence="1">Binds to the 23S rRNA.</text>
</comment>
<comment type="subunit">
    <text evidence="1">Part of the 50S ribosomal subunit.</text>
</comment>
<comment type="similarity">
    <text evidence="1">Belongs to the universal ribosomal protein uL15 family.</text>
</comment>
<name>RL15_MYCBP</name>
<dbReference type="EMBL" id="AM408590">
    <property type="protein sequence ID" value="CAL70759.1"/>
    <property type="molecule type" value="Genomic_DNA"/>
</dbReference>
<dbReference type="RefSeq" id="WP_003403685.1">
    <property type="nucleotide sequence ID" value="NC_008769.1"/>
</dbReference>
<dbReference type="SMR" id="A1KGK4"/>
<dbReference type="KEGG" id="mbb:BCG_0773"/>
<dbReference type="HOGENOM" id="CLU_055188_4_1_11"/>
<dbReference type="Proteomes" id="UP000001472">
    <property type="component" value="Chromosome"/>
</dbReference>
<dbReference type="GO" id="GO:0022625">
    <property type="term" value="C:cytosolic large ribosomal subunit"/>
    <property type="evidence" value="ECO:0007669"/>
    <property type="project" value="TreeGrafter"/>
</dbReference>
<dbReference type="GO" id="GO:0019843">
    <property type="term" value="F:rRNA binding"/>
    <property type="evidence" value="ECO:0007669"/>
    <property type="project" value="UniProtKB-UniRule"/>
</dbReference>
<dbReference type="GO" id="GO:0003735">
    <property type="term" value="F:structural constituent of ribosome"/>
    <property type="evidence" value="ECO:0007669"/>
    <property type="project" value="InterPro"/>
</dbReference>
<dbReference type="GO" id="GO:0006412">
    <property type="term" value="P:translation"/>
    <property type="evidence" value="ECO:0007669"/>
    <property type="project" value="UniProtKB-UniRule"/>
</dbReference>
<dbReference type="FunFam" id="3.100.10.10:FF:000005">
    <property type="entry name" value="50S ribosomal protein L15"/>
    <property type="match status" value="1"/>
</dbReference>
<dbReference type="Gene3D" id="3.100.10.10">
    <property type="match status" value="1"/>
</dbReference>
<dbReference type="HAMAP" id="MF_01341">
    <property type="entry name" value="Ribosomal_uL15"/>
    <property type="match status" value="1"/>
</dbReference>
<dbReference type="InterPro" id="IPR030878">
    <property type="entry name" value="Ribosomal_uL15"/>
</dbReference>
<dbReference type="InterPro" id="IPR021131">
    <property type="entry name" value="Ribosomal_uL15/eL18"/>
</dbReference>
<dbReference type="InterPro" id="IPR036227">
    <property type="entry name" value="Ribosomal_uL15/eL18_sf"/>
</dbReference>
<dbReference type="InterPro" id="IPR005749">
    <property type="entry name" value="Ribosomal_uL15_bac-type"/>
</dbReference>
<dbReference type="InterPro" id="IPR001196">
    <property type="entry name" value="Ribosomal_uL15_CS"/>
</dbReference>
<dbReference type="NCBIfam" id="TIGR01071">
    <property type="entry name" value="rplO_bact"/>
    <property type="match status" value="1"/>
</dbReference>
<dbReference type="PANTHER" id="PTHR12934">
    <property type="entry name" value="50S RIBOSOMAL PROTEIN L15"/>
    <property type="match status" value="1"/>
</dbReference>
<dbReference type="PANTHER" id="PTHR12934:SF11">
    <property type="entry name" value="LARGE RIBOSOMAL SUBUNIT PROTEIN UL15M"/>
    <property type="match status" value="1"/>
</dbReference>
<dbReference type="Pfam" id="PF00828">
    <property type="entry name" value="Ribosomal_L27A"/>
    <property type="match status" value="1"/>
</dbReference>
<dbReference type="SUPFAM" id="SSF52080">
    <property type="entry name" value="Ribosomal proteins L15p and L18e"/>
    <property type="match status" value="1"/>
</dbReference>
<dbReference type="PROSITE" id="PS00475">
    <property type="entry name" value="RIBOSOMAL_L15"/>
    <property type="match status" value="1"/>
</dbReference>
<accession>A1KGK4</accession>
<sequence length="146" mass="15521">MTLKLHDLRPARGSKTARTRVGRGDGSKGKTAGRGTKGTRARKQVPVTFEGGQMPIHMRLPKLKGFRNRFRTEYEIVNVGDINRLFPQGGAVGVDDLVAKGAVRKNALVKVLGDGKLTAKVDVSAHKFSGSARAKITAAGGSATEL</sequence>
<proteinExistence type="inferred from homology"/>
<reference key="1">
    <citation type="journal article" date="2007" name="Proc. Natl. Acad. Sci. U.S.A.">
        <title>Genome plasticity of BCG and impact on vaccine efficacy.</title>
        <authorList>
            <person name="Brosch R."/>
            <person name="Gordon S.V."/>
            <person name="Garnier T."/>
            <person name="Eiglmeier K."/>
            <person name="Frigui W."/>
            <person name="Valenti P."/>
            <person name="Dos Santos S."/>
            <person name="Duthoy S."/>
            <person name="Lacroix C."/>
            <person name="Garcia-Pelayo C."/>
            <person name="Inwald J.K."/>
            <person name="Golby P."/>
            <person name="Garcia J.N."/>
            <person name="Hewinson R.G."/>
            <person name="Behr M.A."/>
            <person name="Quail M.A."/>
            <person name="Churcher C."/>
            <person name="Barrell B.G."/>
            <person name="Parkhill J."/>
            <person name="Cole S.T."/>
        </authorList>
    </citation>
    <scope>NUCLEOTIDE SEQUENCE [LARGE SCALE GENOMIC DNA]</scope>
    <source>
        <strain>BCG / Pasteur 1173P2</strain>
    </source>
</reference>